<feature type="initiator methionine" description="Removed" evidence="2">
    <location>
        <position position="1"/>
    </location>
</feature>
<feature type="chain" id="PRO_0000073707" description="Troponin C, skeletal muscle">
    <location>
        <begin position="2"/>
        <end position="163"/>
    </location>
</feature>
<feature type="domain" description="EF-hand 1" evidence="1">
    <location>
        <begin position="18"/>
        <end position="53"/>
    </location>
</feature>
<feature type="domain" description="EF-hand 2" evidence="1">
    <location>
        <begin position="54"/>
        <end position="89"/>
    </location>
</feature>
<feature type="domain" description="EF-hand 3" evidence="1">
    <location>
        <begin position="94"/>
        <end position="129"/>
    </location>
</feature>
<feature type="domain" description="EF-hand 4" evidence="1">
    <location>
        <begin position="130"/>
        <end position="163"/>
    </location>
</feature>
<feature type="binding site" evidence="1">
    <location>
        <position position="31"/>
    </location>
    <ligand>
        <name>Ca(2+)</name>
        <dbReference type="ChEBI" id="CHEBI:29108"/>
        <label>1</label>
    </ligand>
</feature>
<feature type="binding site" evidence="1">
    <location>
        <position position="33"/>
    </location>
    <ligand>
        <name>Ca(2+)</name>
        <dbReference type="ChEBI" id="CHEBI:29108"/>
        <label>1</label>
    </ligand>
</feature>
<feature type="binding site" evidence="1">
    <location>
        <position position="37"/>
    </location>
    <ligand>
        <name>Ca(2+)</name>
        <dbReference type="ChEBI" id="CHEBI:29108"/>
        <label>1</label>
    </ligand>
</feature>
<feature type="binding site" evidence="1">
    <location>
        <position position="42"/>
    </location>
    <ligand>
        <name>Ca(2+)</name>
        <dbReference type="ChEBI" id="CHEBI:29108"/>
        <label>1</label>
    </ligand>
</feature>
<feature type="binding site" evidence="1">
    <location>
        <position position="67"/>
    </location>
    <ligand>
        <name>Ca(2+)</name>
        <dbReference type="ChEBI" id="CHEBI:29108"/>
        <label>2</label>
    </ligand>
</feature>
<feature type="binding site" evidence="1">
    <location>
        <position position="69"/>
    </location>
    <ligand>
        <name>Ca(2+)</name>
        <dbReference type="ChEBI" id="CHEBI:29108"/>
        <label>2</label>
    </ligand>
</feature>
<feature type="binding site" evidence="1">
    <location>
        <position position="71"/>
    </location>
    <ligand>
        <name>Ca(2+)</name>
        <dbReference type="ChEBI" id="CHEBI:29108"/>
        <label>2</label>
    </ligand>
</feature>
<feature type="binding site" evidence="1">
    <location>
        <position position="73"/>
    </location>
    <ligand>
        <name>Ca(2+)</name>
        <dbReference type="ChEBI" id="CHEBI:29108"/>
        <label>2</label>
    </ligand>
</feature>
<feature type="binding site" evidence="1">
    <location>
        <position position="78"/>
    </location>
    <ligand>
        <name>Ca(2+)</name>
        <dbReference type="ChEBI" id="CHEBI:29108"/>
        <label>2</label>
    </ligand>
</feature>
<feature type="binding site" evidence="1">
    <location>
        <position position="107"/>
    </location>
    <ligand>
        <name>Ca(2+)</name>
        <dbReference type="ChEBI" id="CHEBI:29108"/>
        <label>3</label>
    </ligand>
</feature>
<feature type="binding site" evidence="1">
    <location>
        <position position="109"/>
    </location>
    <ligand>
        <name>Ca(2+)</name>
        <dbReference type="ChEBI" id="CHEBI:29108"/>
        <label>3</label>
    </ligand>
</feature>
<feature type="binding site" evidence="1">
    <location>
        <position position="111"/>
    </location>
    <ligand>
        <name>Ca(2+)</name>
        <dbReference type="ChEBI" id="CHEBI:29108"/>
        <label>3</label>
    </ligand>
</feature>
<feature type="binding site" evidence="1">
    <location>
        <position position="118"/>
    </location>
    <ligand>
        <name>Ca(2+)</name>
        <dbReference type="ChEBI" id="CHEBI:29108"/>
        <label>3</label>
    </ligand>
</feature>
<feature type="binding site" evidence="1">
    <location>
        <position position="143"/>
    </location>
    <ligand>
        <name>Ca(2+)</name>
        <dbReference type="ChEBI" id="CHEBI:29108"/>
        <label>4</label>
    </ligand>
</feature>
<feature type="binding site" evidence="1">
    <location>
        <position position="145"/>
    </location>
    <ligand>
        <name>Ca(2+)</name>
        <dbReference type="ChEBI" id="CHEBI:29108"/>
        <label>4</label>
    </ligand>
</feature>
<feature type="binding site" evidence="1">
    <location>
        <position position="147"/>
    </location>
    <ligand>
        <name>Ca(2+)</name>
        <dbReference type="ChEBI" id="CHEBI:29108"/>
        <label>4</label>
    </ligand>
</feature>
<feature type="binding site" evidence="1">
    <location>
        <position position="149"/>
    </location>
    <ligand>
        <name>Ca(2+)</name>
        <dbReference type="ChEBI" id="CHEBI:29108"/>
        <label>4</label>
    </ligand>
</feature>
<feature type="binding site" evidence="1">
    <location>
        <position position="154"/>
    </location>
    <ligand>
        <name>Ca(2+)</name>
        <dbReference type="ChEBI" id="CHEBI:29108"/>
        <label>4</label>
    </ligand>
</feature>
<feature type="modified residue" description="Blocked amino end (Ala)">
    <location>
        <position position="2"/>
    </location>
</feature>
<feature type="mutagenesis site" description="Decreases calcium affinity." evidence="3">
    <original>T</original>
    <variation>I</variation>
    <location>
        <position position="131"/>
    </location>
</feature>
<feature type="helix" evidence="5">
    <location>
        <begin position="11"/>
        <end position="14"/>
    </location>
</feature>
<feature type="helix" evidence="5">
    <location>
        <begin position="17"/>
        <end position="30"/>
    </location>
</feature>
<feature type="strand" evidence="6">
    <location>
        <begin position="31"/>
        <end position="34"/>
    </location>
</feature>
<feature type="strand" evidence="5">
    <location>
        <begin position="35"/>
        <end position="38"/>
    </location>
</feature>
<feature type="helix" evidence="5">
    <location>
        <begin position="40"/>
        <end position="49"/>
    </location>
</feature>
<feature type="helix" evidence="5">
    <location>
        <begin position="56"/>
        <end position="66"/>
    </location>
</feature>
<feature type="strand" evidence="10">
    <location>
        <begin position="68"/>
        <end position="70"/>
    </location>
</feature>
<feature type="strand" evidence="5">
    <location>
        <begin position="72"/>
        <end position="75"/>
    </location>
</feature>
<feature type="helix" evidence="5">
    <location>
        <begin position="76"/>
        <end position="87"/>
    </location>
</feature>
<feature type="helix" evidence="11">
    <location>
        <begin position="89"/>
        <end position="92"/>
    </location>
</feature>
<feature type="helix" evidence="7">
    <location>
        <begin position="97"/>
        <end position="106"/>
    </location>
</feature>
<feature type="strand" evidence="9">
    <location>
        <begin position="111"/>
        <end position="114"/>
    </location>
</feature>
<feature type="helix" evidence="12">
    <location>
        <begin position="116"/>
        <end position="124"/>
    </location>
</feature>
<feature type="turn" evidence="12">
    <location>
        <begin position="125"/>
        <end position="127"/>
    </location>
</feature>
<feature type="helix" evidence="12">
    <location>
        <begin position="132"/>
        <end position="142"/>
    </location>
</feature>
<feature type="strand" evidence="8">
    <location>
        <begin position="144"/>
        <end position="146"/>
    </location>
</feature>
<feature type="strand" evidence="12">
    <location>
        <begin position="147"/>
        <end position="150"/>
    </location>
</feature>
<feature type="helix" evidence="12">
    <location>
        <begin position="152"/>
        <end position="160"/>
    </location>
</feature>
<name>TNNC2_CHICK</name>
<proteinExistence type="evidence at protein level"/>
<gene>
    <name type="primary">TNNC2</name>
</gene>
<accession>P02588</accession>
<organism>
    <name type="scientific">Gallus gallus</name>
    <name type="common">Chicken</name>
    <dbReference type="NCBI Taxonomy" id="9031"/>
    <lineage>
        <taxon>Eukaryota</taxon>
        <taxon>Metazoa</taxon>
        <taxon>Chordata</taxon>
        <taxon>Craniata</taxon>
        <taxon>Vertebrata</taxon>
        <taxon>Euteleostomi</taxon>
        <taxon>Archelosauria</taxon>
        <taxon>Archosauria</taxon>
        <taxon>Dinosauria</taxon>
        <taxon>Saurischia</taxon>
        <taxon>Theropoda</taxon>
        <taxon>Coelurosauria</taxon>
        <taxon>Aves</taxon>
        <taxon>Neognathae</taxon>
        <taxon>Galloanserae</taxon>
        <taxon>Galliformes</taxon>
        <taxon>Phasianidae</taxon>
        <taxon>Phasianinae</taxon>
        <taxon>Gallus</taxon>
    </lineage>
</organism>
<comment type="function">
    <text>Troponin is the central regulatory protein of striated muscle contraction. Tn consists of three components: Tn-I which is the inhibitor of actomyosin ATPase, Tn-T which contains the binding site for tropomyosin and Tn-C. The binding of calcium to Tn-C abolishes the inhibitory action of Tn on actin filaments.</text>
</comment>
<comment type="miscellaneous">
    <text>Skeletal muscle troponin C binds four calcium ions.</text>
</comment>
<comment type="similarity">
    <text evidence="4">Belongs to the troponin C family.</text>
</comment>
<reference key="1">
    <citation type="journal article" date="1988" name="J. Biol. Chem.">
        <title>Cloning, expression, and site-directed mutagenesis of chicken skeletal muscle troponin C.</title>
        <authorList>
            <person name="Reinach F.C."/>
            <person name="Karlsson R."/>
        </authorList>
    </citation>
    <scope>NUCLEOTIDE SEQUENCE [MRNA]</scope>
    <scope>MUTAGENESIS OF THR-131</scope>
</reference>
<reference key="2">
    <citation type="journal article" date="1991" name="J. Biol. Chem.">
        <title>Determination of and corrections to sequences of turkey and chicken troponins-C. Effects of Thr-130 to Ile mutation on Ca2+ affinity.</title>
        <authorList>
            <person name="Golosinska K."/>
            <person name="Pearlstone J.R."/>
            <person name="Borgford T."/>
            <person name="Oikawa K."/>
            <person name="Kay C.M."/>
            <person name="Carpenter M.R."/>
            <person name="Smillie L.B."/>
        </authorList>
    </citation>
    <scope>PROTEIN SEQUENCE OF 2-163</scope>
</reference>
<reference key="3">
    <citation type="journal article" date="1976" name="FEBS Lett.">
        <title>The amino acid sequence of troponin C from chicken skeletal muscle.</title>
        <authorList>
            <person name="Wilkinson J.M."/>
        </authorList>
    </citation>
    <scope>PRELIMINARY PROTEIN SEQUENCE OF 2-163</scope>
</reference>
<reference key="4">
    <citation type="journal article" date="1985" name="Science">
        <title>Molecular structure of troponin C from chicken skeletal muscle at 3-A resolution.</title>
        <authorList>
            <person name="Sundaralingam M."/>
            <person name="Bergstrom R."/>
            <person name="Strasburg G."/>
            <person name="Rao S.T."/>
            <person name="Raychowdhory P."/>
            <person name="Greaser M.L."/>
            <person name="Wang B.C."/>
        </authorList>
    </citation>
    <scope>X-RAY CRYSTALLOGRAPHY (3.0 ANGSTROMS)</scope>
</reference>
<reference key="5">
    <citation type="journal article" date="1988" name="J. Biol. Chem.">
        <title>Refined structure of chicken skeletal muscle troponin C in the two-calcium state at 2-A resolution.</title>
        <authorList>
            <person name="Satyshur K.A."/>
            <person name="Rao S.T."/>
            <person name="Pyzalska D."/>
            <person name="Drendel W."/>
            <person name="Greaser M.L."/>
            <person name="Sundaralingam M."/>
        </authorList>
    </citation>
    <scope>X-RAY CRYSTALLOGRAPHY (2.0 ANGSTROMS)</scope>
</reference>
<reference key="6">
    <citation type="journal article" date="1994" name="Acta Crystallogr. D">
        <title>Structure of chicken skeletal muscle troponin C at 1.78-A resolution.</title>
        <authorList>
            <person name="Satyshur K.A."/>
            <person name="Pyzalska D."/>
            <person name="Rao S.T."/>
            <person name="Greaser M.L."/>
            <person name="Sundaralingam M."/>
        </authorList>
    </citation>
    <scope>X-RAY CRYSTALLOGRAPHY (1.78 ANGSTROMS)</scope>
</reference>
<reference key="7">
    <citation type="journal article" date="1997" name="J. Mol. Biol.">
        <title>Structural details of a calcium-induced molecular switch: X-ray crystallographic analysis of the calcium-saturated N-terminal domain of troponin C at 1.75-A resolution.</title>
        <authorList>
            <person name="Strynadka N.C."/>
            <person name="Cherney M."/>
            <person name="Sielecki A.R."/>
            <person name="Li M.X."/>
            <person name="Smillie L.B."/>
            <person name="James M.N.G."/>
        </authorList>
    </citation>
    <scope>X-RAY CRYSTALLOGRAPHY (1.75 ANGSTROMS)</scope>
</reference>
<reference key="8">
    <citation type="journal article" date="1992" name="Biochemistry">
        <title>Determination of the solution structure of a synthetic two-site calcium-binding homodimeric protein domain by NMR spectroscopy.</title>
        <authorList>
            <person name="Shaw G.S."/>
            <person name="Hodges R.S."/>
            <person name="Sykes B.D."/>
        </authorList>
    </citation>
    <scope>STRUCTURE BY NMR OF 94-127</scope>
</reference>
<reference key="9">
    <citation type="journal article" date="1995" name="Biochemistry">
        <title>NMR solution structure of calcium-saturated skeletal muscle troponin C.</title>
        <authorList>
            <person name="Slupsky C.M."/>
            <person name="Sykes B.D."/>
        </authorList>
    </citation>
    <scope>STRUCTURE BY NMR</scope>
</reference>
<reference key="10">
    <citation type="journal article" date="1999" name="Biochemistry">
        <title>Low-temperature-induced structural changes in the Apo regulatory domain of skeletal muscle troponin C.</title>
        <authorList>
            <person name="Tsuda S."/>
            <person name="Miura A."/>
            <person name="Gagne S.M."/>
            <person name="Spyracopoulos L."/>
            <person name="Sykes B.D."/>
        </authorList>
    </citation>
    <scope>STRUCTURE BY NMR</scope>
</reference>
<evidence type="ECO:0000255" key="1">
    <source>
        <dbReference type="PROSITE-ProRule" id="PRU00448"/>
    </source>
</evidence>
<evidence type="ECO:0000269" key="2">
    <source>
    </source>
</evidence>
<evidence type="ECO:0000269" key="3">
    <source>
    </source>
</evidence>
<evidence type="ECO:0000305" key="4"/>
<evidence type="ECO:0007829" key="5">
    <source>
        <dbReference type="PDB" id="1AVS"/>
    </source>
</evidence>
<evidence type="ECO:0007829" key="6">
    <source>
        <dbReference type="PDB" id="1BLQ"/>
    </source>
</evidence>
<evidence type="ECO:0007829" key="7">
    <source>
        <dbReference type="PDB" id="1CTA"/>
    </source>
</evidence>
<evidence type="ECO:0007829" key="8">
    <source>
        <dbReference type="PDB" id="1JC2"/>
    </source>
</evidence>
<evidence type="ECO:0007829" key="9">
    <source>
        <dbReference type="PDB" id="1NCX"/>
    </source>
</evidence>
<evidence type="ECO:0007829" key="10">
    <source>
        <dbReference type="PDB" id="1NPQ"/>
    </source>
</evidence>
<evidence type="ECO:0007829" key="11">
    <source>
        <dbReference type="PDB" id="1TNW"/>
    </source>
</evidence>
<evidence type="ECO:0007829" key="12">
    <source>
        <dbReference type="PDB" id="1TOP"/>
    </source>
</evidence>
<protein>
    <recommendedName>
        <fullName>Troponin C, skeletal muscle</fullName>
    </recommendedName>
</protein>
<keyword id="KW-0002">3D-structure</keyword>
<keyword id="KW-0106">Calcium</keyword>
<keyword id="KW-0903">Direct protein sequencing</keyword>
<keyword id="KW-0479">Metal-binding</keyword>
<keyword id="KW-0514">Muscle protein</keyword>
<keyword id="KW-1185">Reference proteome</keyword>
<keyword id="KW-0677">Repeat</keyword>
<sequence>MASMTDQQAEARAFLSEEMIAEFKAAFDMFDADGGGDISTKELGTVMRMLGQNPTKEELDAIIEEVDEDGSGTIDFEEFLVMMVRQMKEDAKGKSEEELANCFRIFDKNADGFIDIEELGEILRATGEHVTEEDIEDLMKDSDKNNDGRIDFDEFLKMMEGVQ</sequence>
<dbReference type="EMBL" id="M19027">
    <property type="protein sequence ID" value="AAA49097.1"/>
    <property type="status" value="ALT_SEQ"/>
    <property type="molecule type" value="mRNA"/>
</dbReference>
<dbReference type="PIR" id="A03015">
    <property type="entry name" value="TPCHCS"/>
</dbReference>
<dbReference type="RefSeq" id="NP_990781.2">
    <property type="nucleotide sequence ID" value="NM_205450.3"/>
</dbReference>
<dbReference type="PDB" id="1AVS">
    <property type="method" value="X-ray"/>
    <property type="resolution" value="1.75 A"/>
    <property type="chains" value="A/B=2-91"/>
</dbReference>
<dbReference type="PDB" id="1BLQ">
    <property type="method" value="NMR"/>
    <property type="chains" value="A=2-91"/>
</dbReference>
<dbReference type="PDB" id="1CTA">
    <property type="method" value="NMR"/>
    <property type="chains" value="A/B=94-127"/>
</dbReference>
<dbReference type="PDB" id="1CTD">
    <property type="method" value="NMR"/>
    <property type="chains" value="A/B=94-127"/>
</dbReference>
<dbReference type="PDB" id="1JC2">
    <property type="method" value="NMR"/>
    <property type="chains" value="A=89-163"/>
</dbReference>
<dbReference type="PDB" id="1NCX">
    <property type="method" value="X-ray"/>
    <property type="resolution" value="1.80 A"/>
    <property type="chains" value="A=2-163"/>
</dbReference>
<dbReference type="PDB" id="1NCY">
    <property type="method" value="X-ray"/>
    <property type="resolution" value="2.10 A"/>
    <property type="chains" value="A=2-163"/>
</dbReference>
<dbReference type="PDB" id="1NCZ">
    <property type="method" value="X-ray"/>
    <property type="resolution" value="1.80 A"/>
    <property type="chains" value="A=2-163"/>
</dbReference>
<dbReference type="PDB" id="1NPQ">
    <property type="method" value="NMR"/>
    <property type="chains" value="A=2-91"/>
</dbReference>
<dbReference type="PDB" id="1PON">
    <property type="method" value="NMR"/>
    <property type="chains" value="A=94-127, B=130-163"/>
</dbReference>
<dbReference type="PDB" id="1SKT">
    <property type="method" value="NMR"/>
    <property type="chains" value="A=2-91"/>
</dbReference>
<dbReference type="PDB" id="1SMG">
    <property type="method" value="NMR"/>
    <property type="chains" value="A=2-91"/>
</dbReference>
<dbReference type="PDB" id="1TNP">
    <property type="method" value="NMR"/>
    <property type="chains" value="A=2-91"/>
</dbReference>
<dbReference type="PDB" id="1TNQ">
    <property type="method" value="NMR"/>
    <property type="chains" value="A=2-91"/>
</dbReference>
<dbReference type="PDB" id="1TNW">
    <property type="method" value="NMR"/>
    <property type="chains" value="A=2-163"/>
</dbReference>
<dbReference type="PDB" id="1TNX">
    <property type="method" value="NMR"/>
    <property type="chains" value="A=2-163"/>
</dbReference>
<dbReference type="PDB" id="1TOP">
    <property type="method" value="X-ray"/>
    <property type="resolution" value="1.78 A"/>
    <property type="chains" value="A=2-163"/>
</dbReference>
<dbReference type="PDB" id="1YTZ">
    <property type="method" value="X-ray"/>
    <property type="resolution" value="3.00 A"/>
    <property type="chains" value="C=2-163"/>
</dbReference>
<dbReference type="PDB" id="1YV0">
    <property type="method" value="X-ray"/>
    <property type="resolution" value="7.00 A"/>
    <property type="chains" value="C=2-163"/>
</dbReference>
<dbReference type="PDB" id="1ZAC">
    <property type="method" value="NMR"/>
    <property type="chains" value="A=2-91"/>
</dbReference>
<dbReference type="PDB" id="2W49">
    <property type="method" value="EM"/>
    <property type="resolution" value="35.00 A"/>
    <property type="chains" value="0/3/6/9=5-163"/>
</dbReference>
<dbReference type="PDB" id="2W4U">
    <property type="method" value="EM"/>
    <property type="resolution" value="35.00 A"/>
    <property type="chains" value="0/3/6/9=5-163"/>
</dbReference>
<dbReference type="PDB" id="4TNC">
    <property type="method" value="X-ray"/>
    <property type="resolution" value="2.00 A"/>
    <property type="chains" value="A=3-163"/>
</dbReference>
<dbReference type="PDBsum" id="1AVS"/>
<dbReference type="PDBsum" id="1BLQ"/>
<dbReference type="PDBsum" id="1CTA"/>
<dbReference type="PDBsum" id="1CTD"/>
<dbReference type="PDBsum" id="1JC2"/>
<dbReference type="PDBsum" id="1NCX"/>
<dbReference type="PDBsum" id="1NCY"/>
<dbReference type="PDBsum" id="1NCZ"/>
<dbReference type="PDBsum" id="1NPQ"/>
<dbReference type="PDBsum" id="1PON"/>
<dbReference type="PDBsum" id="1SKT"/>
<dbReference type="PDBsum" id="1SMG"/>
<dbReference type="PDBsum" id="1TNP"/>
<dbReference type="PDBsum" id="1TNQ"/>
<dbReference type="PDBsum" id="1TNW"/>
<dbReference type="PDBsum" id="1TNX"/>
<dbReference type="PDBsum" id="1TOP"/>
<dbReference type="PDBsum" id="1YTZ"/>
<dbReference type="PDBsum" id="1YV0"/>
<dbReference type="PDBsum" id="1ZAC"/>
<dbReference type="PDBsum" id="2W49"/>
<dbReference type="PDBsum" id="2W4U"/>
<dbReference type="PDBsum" id="4TNC"/>
<dbReference type="BMRB" id="P02588"/>
<dbReference type="SMR" id="P02588"/>
<dbReference type="FunCoup" id="P02588">
    <property type="interactions" value="7"/>
</dbReference>
<dbReference type="IntAct" id="P02588">
    <property type="interactions" value="3"/>
</dbReference>
<dbReference type="MINT" id="P02588"/>
<dbReference type="STRING" id="9031.ENSGALP00000011046"/>
<dbReference type="PaxDb" id="9031-ENSGALP00000011046"/>
<dbReference type="Ensembl" id="ENSGALT00010038335.1">
    <property type="protein sequence ID" value="ENSGALP00010022150.1"/>
    <property type="gene ID" value="ENSGALG00010015909.1"/>
</dbReference>
<dbReference type="GeneID" id="396434"/>
<dbReference type="KEGG" id="gga:396434"/>
<dbReference type="CTD" id="7125"/>
<dbReference type="VEuPathDB" id="HostDB:geneid_396434"/>
<dbReference type="eggNOG" id="KOG0027">
    <property type="taxonomic scope" value="Eukaryota"/>
</dbReference>
<dbReference type="GeneTree" id="ENSGT00940000153541"/>
<dbReference type="HOGENOM" id="CLU_061288_2_5_1"/>
<dbReference type="InParanoid" id="P02588"/>
<dbReference type="OMA" id="VETWEVD"/>
<dbReference type="OrthoDB" id="26525at2759"/>
<dbReference type="PhylomeDB" id="P02588"/>
<dbReference type="Reactome" id="R-GGA-390522">
    <property type="pathway name" value="Striated Muscle Contraction"/>
</dbReference>
<dbReference type="EvolutionaryTrace" id="P02588"/>
<dbReference type="PRO" id="PR:P02588"/>
<dbReference type="Proteomes" id="UP000000539">
    <property type="component" value="Chromosome 20"/>
</dbReference>
<dbReference type="Bgee" id="ENSGALG00000006835">
    <property type="expression patterns" value="Expressed in skeletal muscle tissue and 4 other cell types or tissues"/>
</dbReference>
<dbReference type="GO" id="GO:0005861">
    <property type="term" value="C:troponin complex"/>
    <property type="evidence" value="ECO:0000318"/>
    <property type="project" value="GO_Central"/>
</dbReference>
<dbReference type="GO" id="GO:0005509">
    <property type="term" value="F:calcium ion binding"/>
    <property type="evidence" value="ECO:0007669"/>
    <property type="project" value="InterPro"/>
</dbReference>
<dbReference type="GO" id="GO:0003009">
    <property type="term" value="P:skeletal muscle contraction"/>
    <property type="evidence" value="ECO:0000318"/>
    <property type="project" value="GO_Central"/>
</dbReference>
<dbReference type="CDD" id="cd00051">
    <property type="entry name" value="EFh"/>
    <property type="match status" value="2"/>
</dbReference>
<dbReference type="FunFam" id="1.10.238.10:FF:000107">
    <property type="entry name" value="Troponin C, skeletal muscle"/>
    <property type="match status" value="1"/>
</dbReference>
<dbReference type="Gene3D" id="1.10.238.10">
    <property type="entry name" value="EF-hand"/>
    <property type="match status" value="2"/>
</dbReference>
<dbReference type="InterPro" id="IPR050230">
    <property type="entry name" value="CALM/Myosin/TropC-like"/>
</dbReference>
<dbReference type="InterPro" id="IPR011992">
    <property type="entry name" value="EF-hand-dom_pair"/>
</dbReference>
<dbReference type="InterPro" id="IPR018247">
    <property type="entry name" value="EF_Hand_1_Ca_BS"/>
</dbReference>
<dbReference type="InterPro" id="IPR002048">
    <property type="entry name" value="EF_hand_dom"/>
</dbReference>
<dbReference type="PANTHER" id="PTHR23048">
    <property type="entry name" value="MYOSIN LIGHT CHAIN 1, 3"/>
    <property type="match status" value="1"/>
</dbReference>
<dbReference type="PANTHER" id="PTHR23048:SF57">
    <property type="entry name" value="TROPONIN C2, FAST SKELETAL TYPE"/>
    <property type="match status" value="1"/>
</dbReference>
<dbReference type="Pfam" id="PF13499">
    <property type="entry name" value="EF-hand_7"/>
    <property type="match status" value="2"/>
</dbReference>
<dbReference type="SMART" id="SM00054">
    <property type="entry name" value="EFh"/>
    <property type="match status" value="4"/>
</dbReference>
<dbReference type="SUPFAM" id="SSF47473">
    <property type="entry name" value="EF-hand"/>
    <property type="match status" value="1"/>
</dbReference>
<dbReference type="PROSITE" id="PS00018">
    <property type="entry name" value="EF_HAND_1"/>
    <property type="match status" value="4"/>
</dbReference>
<dbReference type="PROSITE" id="PS50222">
    <property type="entry name" value="EF_HAND_2"/>
    <property type="match status" value="4"/>
</dbReference>